<dbReference type="EC" id="2.6.1.9" evidence="1"/>
<dbReference type="EMBL" id="CP000393">
    <property type="protein sequence ID" value="ABG53654.1"/>
    <property type="molecule type" value="Genomic_DNA"/>
</dbReference>
<dbReference type="RefSeq" id="WP_011613971.1">
    <property type="nucleotide sequence ID" value="NC_008312.1"/>
</dbReference>
<dbReference type="SMR" id="Q10VS0"/>
<dbReference type="STRING" id="203124.Tery_4690"/>
<dbReference type="KEGG" id="ter:Tery_4690"/>
<dbReference type="eggNOG" id="COG0079">
    <property type="taxonomic scope" value="Bacteria"/>
</dbReference>
<dbReference type="HOGENOM" id="CLU_017584_3_1_3"/>
<dbReference type="OrthoDB" id="9813612at2"/>
<dbReference type="UniPathway" id="UPA00031">
    <property type="reaction ID" value="UER00012"/>
</dbReference>
<dbReference type="GO" id="GO:0004400">
    <property type="term" value="F:histidinol-phosphate transaminase activity"/>
    <property type="evidence" value="ECO:0007669"/>
    <property type="project" value="UniProtKB-UniRule"/>
</dbReference>
<dbReference type="GO" id="GO:0030170">
    <property type="term" value="F:pyridoxal phosphate binding"/>
    <property type="evidence" value="ECO:0007669"/>
    <property type="project" value="InterPro"/>
</dbReference>
<dbReference type="GO" id="GO:0000105">
    <property type="term" value="P:L-histidine biosynthetic process"/>
    <property type="evidence" value="ECO:0007669"/>
    <property type="project" value="UniProtKB-UniRule"/>
</dbReference>
<dbReference type="CDD" id="cd00609">
    <property type="entry name" value="AAT_like"/>
    <property type="match status" value="1"/>
</dbReference>
<dbReference type="Gene3D" id="3.90.1150.10">
    <property type="entry name" value="Aspartate Aminotransferase, domain 1"/>
    <property type="match status" value="1"/>
</dbReference>
<dbReference type="Gene3D" id="3.40.640.10">
    <property type="entry name" value="Type I PLP-dependent aspartate aminotransferase-like (Major domain)"/>
    <property type="match status" value="1"/>
</dbReference>
<dbReference type="HAMAP" id="MF_01023">
    <property type="entry name" value="HisC_aminotrans_2"/>
    <property type="match status" value="1"/>
</dbReference>
<dbReference type="InterPro" id="IPR004839">
    <property type="entry name" value="Aminotransferase_I/II_large"/>
</dbReference>
<dbReference type="InterPro" id="IPR005861">
    <property type="entry name" value="HisP_aminotrans"/>
</dbReference>
<dbReference type="InterPro" id="IPR015424">
    <property type="entry name" value="PyrdxlP-dep_Trfase"/>
</dbReference>
<dbReference type="InterPro" id="IPR015421">
    <property type="entry name" value="PyrdxlP-dep_Trfase_major"/>
</dbReference>
<dbReference type="InterPro" id="IPR015422">
    <property type="entry name" value="PyrdxlP-dep_Trfase_small"/>
</dbReference>
<dbReference type="NCBIfam" id="TIGR01141">
    <property type="entry name" value="hisC"/>
    <property type="match status" value="1"/>
</dbReference>
<dbReference type="NCBIfam" id="NF002726">
    <property type="entry name" value="PRK02610.1"/>
    <property type="match status" value="1"/>
</dbReference>
<dbReference type="PANTHER" id="PTHR42885:SF2">
    <property type="entry name" value="HISTIDINOL-PHOSPHATE AMINOTRANSFERASE"/>
    <property type="match status" value="1"/>
</dbReference>
<dbReference type="PANTHER" id="PTHR42885">
    <property type="entry name" value="HISTIDINOL-PHOSPHATE AMINOTRANSFERASE-RELATED"/>
    <property type="match status" value="1"/>
</dbReference>
<dbReference type="Pfam" id="PF00155">
    <property type="entry name" value="Aminotran_1_2"/>
    <property type="match status" value="1"/>
</dbReference>
<dbReference type="SUPFAM" id="SSF53383">
    <property type="entry name" value="PLP-dependent transferases"/>
    <property type="match status" value="1"/>
</dbReference>
<accession>Q10VS0</accession>
<gene>
    <name evidence="1" type="primary">hisC</name>
    <name type="ordered locus">Tery_4690</name>
</gene>
<proteinExistence type="inferred from homology"/>
<reference key="1">
    <citation type="journal article" date="2015" name="Proc. Natl. Acad. Sci. U.S.A.">
        <title>Trichodesmium genome maintains abundant, widespread noncoding DNA in situ, despite oligotrophic lifestyle.</title>
        <authorList>
            <person name="Walworth N."/>
            <person name="Pfreundt U."/>
            <person name="Nelson W.C."/>
            <person name="Mincer T."/>
            <person name="Heidelberg J.F."/>
            <person name="Fu F."/>
            <person name="Waterbury J.B."/>
            <person name="Glavina del Rio T."/>
            <person name="Goodwin L."/>
            <person name="Kyrpides N.C."/>
            <person name="Land M.L."/>
            <person name="Woyke T."/>
            <person name="Hutchins D.A."/>
            <person name="Hess W.R."/>
            <person name="Webb E.A."/>
        </authorList>
    </citation>
    <scope>NUCLEOTIDE SEQUENCE [LARGE SCALE GENOMIC DNA]</scope>
    <source>
        <strain>IMS101</strain>
    </source>
</reference>
<feature type="chain" id="PRO_1000063509" description="Histidinol-phosphate aminotransferase">
    <location>
        <begin position="1"/>
        <end position="376"/>
    </location>
</feature>
<feature type="modified residue" description="N6-(pyridoxal phosphate)lysine" evidence="1">
    <location>
        <position position="230"/>
    </location>
</feature>
<keyword id="KW-0028">Amino-acid biosynthesis</keyword>
<keyword id="KW-0032">Aminotransferase</keyword>
<keyword id="KW-0368">Histidine biosynthesis</keyword>
<keyword id="KW-0663">Pyridoxal phosphate</keyword>
<keyword id="KW-0808">Transferase</keyword>
<evidence type="ECO:0000255" key="1">
    <source>
        <dbReference type="HAMAP-Rule" id="MF_01023"/>
    </source>
</evidence>
<organism>
    <name type="scientific">Trichodesmium erythraeum (strain IMS101)</name>
    <dbReference type="NCBI Taxonomy" id="203124"/>
    <lineage>
        <taxon>Bacteria</taxon>
        <taxon>Bacillati</taxon>
        <taxon>Cyanobacteriota</taxon>
        <taxon>Cyanophyceae</taxon>
        <taxon>Oscillatoriophycideae</taxon>
        <taxon>Oscillatoriales</taxon>
        <taxon>Microcoleaceae</taxon>
        <taxon>Trichodesmium</taxon>
    </lineage>
</organism>
<protein>
    <recommendedName>
        <fullName evidence="1">Histidinol-phosphate aminotransferase</fullName>
        <ecNumber evidence="1">2.6.1.9</ecNumber>
    </recommendedName>
    <alternativeName>
        <fullName evidence="1">Imidazole acetol-phosphate transaminase</fullName>
    </alternativeName>
</protein>
<comment type="catalytic activity">
    <reaction evidence="1">
        <text>L-histidinol phosphate + 2-oxoglutarate = 3-(imidazol-4-yl)-2-oxopropyl phosphate + L-glutamate</text>
        <dbReference type="Rhea" id="RHEA:23744"/>
        <dbReference type="ChEBI" id="CHEBI:16810"/>
        <dbReference type="ChEBI" id="CHEBI:29985"/>
        <dbReference type="ChEBI" id="CHEBI:57766"/>
        <dbReference type="ChEBI" id="CHEBI:57980"/>
        <dbReference type="EC" id="2.6.1.9"/>
    </reaction>
</comment>
<comment type="cofactor">
    <cofactor evidence="1">
        <name>pyridoxal 5'-phosphate</name>
        <dbReference type="ChEBI" id="CHEBI:597326"/>
    </cofactor>
</comment>
<comment type="pathway">
    <text evidence="1">Amino-acid biosynthesis; L-histidine biosynthesis; L-histidine from 5-phospho-alpha-D-ribose 1-diphosphate: step 7/9.</text>
</comment>
<comment type="subunit">
    <text evidence="1">Homodimer.</text>
</comment>
<comment type="similarity">
    <text evidence="1">Belongs to the class-II pyridoxal-phosphate-dependent aminotransferase family. Histidinol-phosphate aminotransferase subfamily.</text>
</comment>
<name>HIS8_TRIEI</name>
<sequence length="376" mass="41852">MFTFIRSNLNNLKAYTPHSAGSSEILLDRLDTNECPYDLPDNLKQKLAENYQQLIETNRYPDGSHLKLKEAIAKYVNEVTPSANISANNISVGNGSDELIRSLLIVTCVGGEGSILTATPTFSMYSILAQTLGIPVVNVGRKESNFEIDITAAEDAINHTKNPSIKAIFVVHPNSPTANALNSQELVWLRSLPDDILVVIDEAYFEFSQTSLAEELNQHPNWVILRTFSKAFRLASLRVGYAIAHPEIIINLEKVRLPYNLPSFSQAAAQLVLNHSQHLLSFIPEILRERSKLFATFGEIPALKVWKSAANFLYMRLTDEGLKLMGKSSQDQSLSSLMQRLKTQGTLIRHTGGGLRITIGTSEENQRTVERIKGIF</sequence>